<feature type="chain" id="PRO_1000149521" description="2,3-bisphosphoglycerate-dependent phosphoglycerate mutase">
    <location>
        <begin position="1"/>
        <end position="208"/>
    </location>
</feature>
<feature type="active site" description="Tele-phosphohistidine intermediate" evidence="1">
    <location>
        <position position="10"/>
    </location>
</feature>
<feature type="active site" description="Proton donor/acceptor" evidence="1">
    <location>
        <position position="88"/>
    </location>
</feature>
<feature type="binding site" evidence="1">
    <location>
        <begin position="9"/>
        <end position="16"/>
    </location>
    <ligand>
        <name>substrate</name>
    </ligand>
</feature>
<feature type="binding site" evidence="1">
    <location>
        <begin position="22"/>
        <end position="23"/>
    </location>
    <ligand>
        <name>substrate</name>
    </ligand>
</feature>
<feature type="binding site" evidence="1">
    <location>
        <position position="61"/>
    </location>
    <ligand>
        <name>substrate</name>
    </ligand>
</feature>
<feature type="binding site" evidence="1">
    <location>
        <begin position="88"/>
        <end position="91"/>
    </location>
    <ligand>
        <name>substrate</name>
    </ligand>
</feature>
<feature type="binding site" evidence="1">
    <location>
        <position position="99"/>
    </location>
    <ligand>
        <name>substrate</name>
    </ligand>
</feature>
<feature type="binding site" evidence="1">
    <location>
        <begin position="115"/>
        <end position="116"/>
    </location>
    <ligand>
        <name>substrate</name>
    </ligand>
</feature>
<feature type="binding site" evidence="1">
    <location>
        <begin position="159"/>
        <end position="160"/>
    </location>
    <ligand>
        <name>substrate</name>
    </ligand>
</feature>
<feature type="site" description="Transition state stabilizer" evidence="1">
    <location>
        <position position="158"/>
    </location>
</feature>
<sequence>MERLLVLARHGQSEWNLKNLFTGWRDPDLTEVGIAEARAAGRRLKAKGIRFDICFTSALTRAQRTAALILEELGQPDLPTIADEALNERDYGDLSGLNKDDARARWGKDQVHIWRRSYDVPPPGGESLKDTVARVLPYTMREILPRVMRGERVLVAAHGNSLRALVMVLDGLTTETIPGLELWTGVPLVYRLKADTTVESKEVLDKDA</sequence>
<accession>B0UBD4</accession>
<name>GPMA_METS4</name>
<reference key="1">
    <citation type="submission" date="2008-02" db="EMBL/GenBank/DDBJ databases">
        <title>Complete sequence of chromosome of Methylobacterium sp. 4-46.</title>
        <authorList>
            <consortium name="US DOE Joint Genome Institute"/>
            <person name="Copeland A."/>
            <person name="Lucas S."/>
            <person name="Lapidus A."/>
            <person name="Glavina del Rio T."/>
            <person name="Dalin E."/>
            <person name="Tice H."/>
            <person name="Bruce D."/>
            <person name="Goodwin L."/>
            <person name="Pitluck S."/>
            <person name="Chertkov O."/>
            <person name="Brettin T."/>
            <person name="Detter J.C."/>
            <person name="Han C."/>
            <person name="Kuske C.R."/>
            <person name="Schmutz J."/>
            <person name="Larimer F."/>
            <person name="Land M."/>
            <person name="Hauser L."/>
            <person name="Kyrpides N."/>
            <person name="Ivanova N."/>
            <person name="Marx C.J."/>
            <person name="Richardson P."/>
        </authorList>
    </citation>
    <scope>NUCLEOTIDE SEQUENCE [LARGE SCALE GENOMIC DNA]</scope>
    <source>
        <strain>4-46</strain>
    </source>
</reference>
<organism>
    <name type="scientific">Methylobacterium sp. (strain 4-46)</name>
    <dbReference type="NCBI Taxonomy" id="426117"/>
    <lineage>
        <taxon>Bacteria</taxon>
        <taxon>Pseudomonadati</taxon>
        <taxon>Pseudomonadota</taxon>
        <taxon>Alphaproteobacteria</taxon>
        <taxon>Hyphomicrobiales</taxon>
        <taxon>Methylobacteriaceae</taxon>
        <taxon>Methylobacterium</taxon>
    </lineage>
</organism>
<protein>
    <recommendedName>
        <fullName evidence="1">2,3-bisphosphoglycerate-dependent phosphoglycerate mutase</fullName>
        <shortName evidence="1">BPG-dependent PGAM</shortName>
        <shortName evidence="1">PGAM</shortName>
        <shortName evidence="1">Phosphoglyceromutase</shortName>
        <shortName evidence="1">dPGM</shortName>
        <ecNumber evidence="1">5.4.2.11</ecNumber>
    </recommendedName>
</protein>
<evidence type="ECO:0000255" key="1">
    <source>
        <dbReference type="HAMAP-Rule" id="MF_01039"/>
    </source>
</evidence>
<keyword id="KW-0312">Gluconeogenesis</keyword>
<keyword id="KW-0324">Glycolysis</keyword>
<keyword id="KW-0413">Isomerase</keyword>
<gene>
    <name evidence="1" type="primary">gpmA</name>
    <name type="ordered locus">M446_2067</name>
</gene>
<comment type="function">
    <text evidence="1">Catalyzes the interconversion of 2-phosphoglycerate and 3-phosphoglycerate.</text>
</comment>
<comment type="catalytic activity">
    <reaction evidence="1">
        <text>(2R)-2-phosphoglycerate = (2R)-3-phosphoglycerate</text>
        <dbReference type="Rhea" id="RHEA:15901"/>
        <dbReference type="ChEBI" id="CHEBI:58272"/>
        <dbReference type="ChEBI" id="CHEBI:58289"/>
        <dbReference type="EC" id="5.4.2.11"/>
    </reaction>
</comment>
<comment type="pathway">
    <text evidence="1">Carbohydrate degradation; glycolysis; pyruvate from D-glyceraldehyde 3-phosphate: step 3/5.</text>
</comment>
<comment type="subunit">
    <text evidence="1">Homodimer.</text>
</comment>
<comment type="similarity">
    <text evidence="1">Belongs to the phosphoglycerate mutase family. BPG-dependent PGAM subfamily.</text>
</comment>
<dbReference type="EC" id="5.4.2.11" evidence="1"/>
<dbReference type="EMBL" id="CP000943">
    <property type="protein sequence ID" value="ACA16530.1"/>
    <property type="molecule type" value="Genomic_DNA"/>
</dbReference>
<dbReference type="RefSeq" id="WP_012331939.1">
    <property type="nucleotide sequence ID" value="NC_010511.1"/>
</dbReference>
<dbReference type="SMR" id="B0UBD4"/>
<dbReference type="STRING" id="426117.M446_2067"/>
<dbReference type="KEGG" id="met:M446_2067"/>
<dbReference type="eggNOG" id="COG0588">
    <property type="taxonomic scope" value="Bacteria"/>
</dbReference>
<dbReference type="HOGENOM" id="CLU_033323_1_4_5"/>
<dbReference type="UniPathway" id="UPA00109">
    <property type="reaction ID" value="UER00186"/>
</dbReference>
<dbReference type="GO" id="GO:0004619">
    <property type="term" value="F:phosphoglycerate mutase activity"/>
    <property type="evidence" value="ECO:0007669"/>
    <property type="project" value="UniProtKB-EC"/>
</dbReference>
<dbReference type="GO" id="GO:0006094">
    <property type="term" value="P:gluconeogenesis"/>
    <property type="evidence" value="ECO:0007669"/>
    <property type="project" value="UniProtKB-UniRule"/>
</dbReference>
<dbReference type="GO" id="GO:0006096">
    <property type="term" value="P:glycolytic process"/>
    <property type="evidence" value="ECO:0007669"/>
    <property type="project" value="UniProtKB-UniRule"/>
</dbReference>
<dbReference type="CDD" id="cd07067">
    <property type="entry name" value="HP_PGM_like"/>
    <property type="match status" value="1"/>
</dbReference>
<dbReference type="Gene3D" id="3.40.50.1240">
    <property type="entry name" value="Phosphoglycerate mutase-like"/>
    <property type="match status" value="1"/>
</dbReference>
<dbReference type="HAMAP" id="MF_01039">
    <property type="entry name" value="PGAM_GpmA"/>
    <property type="match status" value="1"/>
</dbReference>
<dbReference type="InterPro" id="IPR013078">
    <property type="entry name" value="His_Pase_superF_clade-1"/>
</dbReference>
<dbReference type="InterPro" id="IPR029033">
    <property type="entry name" value="His_PPase_superfam"/>
</dbReference>
<dbReference type="InterPro" id="IPR001345">
    <property type="entry name" value="PG/BPGM_mutase_AS"/>
</dbReference>
<dbReference type="InterPro" id="IPR005952">
    <property type="entry name" value="Phosphogly_mut1"/>
</dbReference>
<dbReference type="NCBIfam" id="TIGR01258">
    <property type="entry name" value="pgm_1"/>
    <property type="match status" value="1"/>
</dbReference>
<dbReference type="NCBIfam" id="NF002339">
    <property type="entry name" value="PRK01295.1"/>
    <property type="match status" value="1"/>
</dbReference>
<dbReference type="PANTHER" id="PTHR11931">
    <property type="entry name" value="PHOSPHOGLYCERATE MUTASE"/>
    <property type="match status" value="1"/>
</dbReference>
<dbReference type="Pfam" id="PF00300">
    <property type="entry name" value="His_Phos_1"/>
    <property type="match status" value="1"/>
</dbReference>
<dbReference type="PIRSF" id="PIRSF000709">
    <property type="entry name" value="6PFK_2-Ptase"/>
    <property type="match status" value="1"/>
</dbReference>
<dbReference type="SMART" id="SM00855">
    <property type="entry name" value="PGAM"/>
    <property type="match status" value="1"/>
</dbReference>
<dbReference type="SUPFAM" id="SSF53254">
    <property type="entry name" value="Phosphoglycerate mutase-like"/>
    <property type="match status" value="1"/>
</dbReference>
<dbReference type="PROSITE" id="PS00175">
    <property type="entry name" value="PG_MUTASE"/>
    <property type="match status" value="1"/>
</dbReference>
<proteinExistence type="inferred from homology"/>